<comment type="function">
    <text evidence="1">Catalyzes the ATP-dependent amination of UTP to CTP with either L-glutamine or ammonia as the source of nitrogen. Regulates intracellular CTP levels through interactions with the four ribonucleotide triphosphates.</text>
</comment>
<comment type="catalytic activity">
    <reaction evidence="1">
        <text>UTP + L-glutamine + ATP + H2O = CTP + L-glutamate + ADP + phosphate + 2 H(+)</text>
        <dbReference type="Rhea" id="RHEA:26426"/>
        <dbReference type="ChEBI" id="CHEBI:15377"/>
        <dbReference type="ChEBI" id="CHEBI:15378"/>
        <dbReference type="ChEBI" id="CHEBI:29985"/>
        <dbReference type="ChEBI" id="CHEBI:30616"/>
        <dbReference type="ChEBI" id="CHEBI:37563"/>
        <dbReference type="ChEBI" id="CHEBI:43474"/>
        <dbReference type="ChEBI" id="CHEBI:46398"/>
        <dbReference type="ChEBI" id="CHEBI:58359"/>
        <dbReference type="ChEBI" id="CHEBI:456216"/>
        <dbReference type="EC" id="6.3.4.2"/>
    </reaction>
</comment>
<comment type="catalytic activity">
    <reaction evidence="1">
        <text>L-glutamine + H2O = L-glutamate + NH4(+)</text>
        <dbReference type="Rhea" id="RHEA:15889"/>
        <dbReference type="ChEBI" id="CHEBI:15377"/>
        <dbReference type="ChEBI" id="CHEBI:28938"/>
        <dbReference type="ChEBI" id="CHEBI:29985"/>
        <dbReference type="ChEBI" id="CHEBI:58359"/>
    </reaction>
</comment>
<comment type="catalytic activity">
    <reaction evidence="1">
        <text>UTP + NH4(+) + ATP = CTP + ADP + phosphate + 2 H(+)</text>
        <dbReference type="Rhea" id="RHEA:16597"/>
        <dbReference type="ChEBI" id="CHEBI:15378"/>
        <dbReference type="ChEBI" id="CHEBI:28938"/>
        <dbReference type="ChEBI" id="CHEBI:30616"/>
        <dbReference type="ChEBI" id="CHEBI:37563"/>
        <dbReference type="ChEBI" id="CHEBI:43474"/>
        <dbReference type="ChEBI" id="CHEBI:46398"/>
        <dbReference type="ChEBI" id="CHEBI:456216"/>
    </reaction>
</comment>
<comment type="activity regulation">
    <text evidence="1">Allosterically activated by GTP, when glutamine is the substrate; GTP has no effect on the reaction when ammonia is the substrate. The allosteric effector GTP functions by stabilizing the protein conformation that binds the tetrahedral intermediate(s) formed during glutamine hydrolysis. Inhibited by the product CTP, via allosteric rather than competitive inhibition.</text>
</comment>
<comment type="pathway">
    <text evidence="1">Pyrimidine metabolism; CTP biosynthesis via de novo pathway; CTP from UDP: step 2/2.</text>
</comment>
<comment type="subunit">
    <text evidence="1">Homotetramer.</text>
</comment>
<comment type="miscellaneous">
    <text evidence="1">CTPSs have evolved a hybrid strategy for distinguishing between UTP and CTP. The overlapping regions of the product feedback inhibitory and substrate sites recognize a common feature in both compounds, the triphosphate moiety. To differentiate isosteric substrate and product pyrimidine rings, an additional pocket far from the expected kinase/ligase catalytic site, specifically recognizes the cytosine and ribose portions of the product inhibitor.</text>
</comment>
<comment type="similarity">
    <text evidence="1">Belongs to the CTP synthase family.</text>
</comment>
<comment type="sequence caution" evidence="2">
    <conflict type="erroneous initiation">
        <sequence resource="EMBL-CDS" id="AAK87397"/>
    </conflict>
</comment>
<dbReference type="EC" id="6.3.4.2" evidence="1"/>
<dbReference type="EMBL" id="AE007869">
    <property type="protein sequence ID" value="AAK87397.1"/>
    <property type="status" value="ALT_INIT"/>
    <property type="molecule type" value="Genomic_DNA"/>
</dbReference>
<dbReference type="PIR" id="AF2775">
    <property type="entry name" value="AF2775"/>
</dbReference>
<dbReference type="PIR" id="D97555">
    <property type="entry name" value="D97555"/>
</dbReference>
<dbReference type="RefSeq" id="NP_354612.1">
    <property type="nucleotide sequence ID" value="NC_003062.2"/>
</dbReference>
<dbReference type="SMR" id="Q8UEY5"/>
<dbReference type="STRING" id="176299.Atu1618"/>
<dbReference type="MEROPS" id="C26.964"/>
<dbReference type="EnsemblBacteria" id="AAK87397">
    <property type="protein sequence ID" value="AAK87397"/>
    <property type="gene ID" value="Atu1618"/>
</dbReference>
<dbReference type="KEGG" id="atu:Atu1618"/>
<dbReference type="PATRIC" id="fig|176299.10.peg.1637"/>
<dbReference type="eggNOG" id="COG0504">
    <property type="taxonomic scope" value="Bacteria"/>
</dbReference>
<dbReference type="HOGENOM" id="CLU_011675_5_0_5"/>
<dbReference type="OrthoDB" id="9801107at2"/>
<dbReference type="UniPathway" id="UPA00159">
    <property type="reaction ID" value="UER00277"/>
</dbReference>
<dbReference type="Proteomes" id="UP000000813">
    <property type="component" value="Chromosome circular"/>
</dbReference>
<dbReference type="GO" id="GO:0005829">
    <property type="term" value="C:cytosol"/>
    <property type="evidence" value="ECO:0007669"/>
    <property type="project" value="TreeGrafter"/>
</dbReference>
<dbReference type="GO" id="GO:0005524">
    <property type="term" value="F:ATP binding"/>
    <property type="evidence" value="ECO:0007669"/>
    <property type="project" value="UniProtKB-KW"/>
</dbReference>
<dbReference type="GO" id="GO:0003883">
    <property type="term" value="F:CTP synthase activity"/>
    <property type="evidence" value="ECO:0007669"/>
    <property type="project" value="UniProtKB-UniRule"/>
</dbReference>
<dbReference type="GO" id="GO:0004359">
    <property type="term" value="F:glutaminase activity"/>
    <property type="evidence" value="ECO:0007669"/>
    <property type="project" value="RHEA"/>
</dbReference>
<dbReference type="GO" id="GO:0042802">
    <property type="term" value="F:identical protein binding"/>
    <property type="evidence" value="ECO:0007669"/>
    <property type="project" value="TreeGrafter"/>
</dbReference>
<dbReference type="GO" id="GO:0046872">
    <property type="term" value="F:metal ion binding"/>
    <property type="evidence" value="ECO:0007669"/>
    <property type="project" value="UniProtKB-KW"/>
</dbReference>
<dbReference type="GO" id="GO:0044210">
    <property type="term" value="P:'de novo' CTP biosynthetic process"/>
    <property type="evidence" value="ECO:0007669"/>
    <property type="project" value="UniProtKB-UniRule"/>
</dbReference>
<dbReference type="GO" id="GO:0019856">
    <property type="term" value="P:pyrimidine nucleobase biosynthetic process"/>
    <property type="evidence" value="ECO:0007669"/>
    <property type="project" value="TreeGrafter"/>
</dbReference>
<dbReference type="CDD" id="cd03113">
    <property type="entry name" value="CTPS_N"/>
    <property type="match status" value="1"/>
</dbReference>
<dbReference type="CDD" id="cd01746">
    <property type="entry name" value="GATase1_CTP_Synthase"/>
    <property type="match status" value="1"/>
</dbReference>
<dbReference type="FunFam" id="3.40.50.300:FF:000009">
    <property type="entry name" value="CTP synthase"/>
    <property type="match status" value="1"/>
</dbReference>
<dbReference type="FunFam" id="3.40.50.880:FF:000002">
    <property type="entry name" value="CTP synthase"/>
    <property type="match status" value="1"/>
</dbReference>
<dbReference type="Gene3D" id="3.40.50.880">
    <property type="match status" value="1"/>
</dbReference>
<dbReference type="Gene3D" id="3.40.50.300">
    <property type="entry name" value="P-loop containing nucleotide triphosphate hydrolases"/>
    <property type="match status" value="1"/>
</dbReference>
<dbReference type="HAMAP" id="MF_01227">
    <property type="entry name" value="PyrG"/>
    <property type="match status" value="1"/>
</dbReference>
<dbReference type="InterPro" id="IPR029062">
    <property type="entry name" value="Class_I_gatase-like"/>
</dbReference>
<dbReference type="InterPro" id="IPR004468">
    <property type="entry name" value="CTP_synthase"/>
</dbReference>
<dbReference type="InterPro" id="IPR017456">
    <property type="entry name" value="CTP_synthase_N"/>
</dbReference>
<dbReference type="InterPro" id="IPR017926">
    <property type="entry name" value="GATASE"/>
</dbReference>
<dbReference type="InterPro" id="IPR033828">
    <property type="entry name" value="GATase1_CTP_Synthase"/>
</dbReference>
<dbReference type="InterPro" id="IPR027417">
    <property type="entry name" value="P-loop_NTPase"/>
</dbReference>
<dbReference type="NCBIfam" id="NF003792">
    <property type="entry name" value="PRK05380.1"/>
    <property type="match status" value="1"/>
</dbReference>
<dbReference type="NCBIfam" id="TIGR00337">
    <property type="entry name" value="PyrG"/>
    <property type="match status" value="1"/>
</dbReference>
<dbReference type="PANTHER" id="PTHR11550">
    <property type="entry name" value="CTP SYNTHASE"/>
    <property type="match status" value="1"/>
</dbReference>
<dbReference type="PANTHER" id="PTHR11550:SF0">
    <property type="entry name" value="CTP SYNTHASE-RELATED"/>
    <property type="match status" value="1"/>
</dbReference>
<dbReference type="Pfam" id="PF06418">
    <property type="entry name" value="CTP_synth_N"/>
    <property type="match status" value="1"/>
</dbReference>
<dbReference type="Pfam" id="PF00117">
    <property type="entry name" value="GATase"/>
    <property type="match status" value="1"/>
</dbReference>
<dbReference type="SUPFAM" id="SSF52317">
    <property type="entry name" value="Class I glutamine amidotransferase-like"/>
    <property type="match status" value="1"/>
</dbReference>
<dbReference type="SUPFAM" id="SSF52540">
    <property type="entry name" value="P-loop containing nucleoside triphosphate hydrolases"/>
    <property type="match status" value="1"/>
</dbReference>
<dbReference type="PROSITE" id="PS51273">
    <property type="entry name" value="GATASE_TYPE_1"/>
    <property type="match status" value="1"/>
</dbReference>
<sequence length="542" mass="60029">MARYVFITGGVVSSLGKGIAAAALGALLQSRGYRVRLRKLDPYLNVDPGTMSPTQHGEVFVTDDGAETDLDLGHYERFTGRSATKTDNITTGRIYKNIIDKERRGDYLGATVQVIPHVTNEIKDFVTEGNDDYDFVICEIGGTVGDIEAMPFMEAIRQLGNDLPRGTAIYVHLTLMPYIPAAGELKTKPTQHSVKELQALGIHPDILLVRADREIPEAERRKLSLFCNVRPSAVIQALDVANIYDVPIAYHNEGLDSEVLAAFGIEPAPKPRLEQWEEVCNRIRTPEGEVTIAIVGKYTGLKDAYKSLIEALHHGGFANRVKVKLEWIESEVFEKEDPTPYLEKVNGILVPGGFGERGSEGKIMAAQFARERNVPYFGICFGMQMAVVEAARHLAGIENASSTEFGPTAEPVVGLMTEWVKGNELEKRSTKGDLGGTMRLGAYKAALKKDTKIAEIYGTTDISERHRHRYEVNVDYKDRLEECGLVFSGMSPDGVLPETVEYPDHPWFIGVQYHPELKSRPLDPHPLFASFVEAAVEQSRLV</sequence>
<feature type="chain" id="PRO_0000138158" description="CTP synthase">
    <location>
        <begin position="1"/>
        <end position="542"/>
    </location>
</feature>
<feature type="domain" description="Glutamine amidotransferase type-1" evidence="1">
    <location>
        <begin position="291"/>
        <end position="541"/>
    </location>
</feature>
<feature type="region of interest" description="Amidoligase domain" evidence="1">
    <location>
        <begin position="1"/>
        <end position="265"/>
    </location>
</feature>
<feature type="active site" description="Nucleophile; for glutamine hydrolysis" evidence="1">
    <location>
        <position position="380"/>
    </location>
</feature>
<feature type="active site" evidence="1">
    <location>
        <position position="514"/>
    </location>
</feature>
<feature type="active site" evidence="1">
    <location>
        <position position="516"/>
    </location>
</feature>
<feature type="binding site" evidence="1">
    <location>
        <position position="13"/>
    </location>
    <ligand>
        <name>CTP</name>
        <dbReference type="ChEBI" id="CHEBI:37563"/>
        <note>allosteric inhibitor</note>
    </ligand>
</feature>
<feature type="binding site" evidence="1">
    <location>
        <position position="13"/>
    </location>
    <ligand>
        <name>UTP</name>
        <dbReference type="ChEBI" id="CHEBI:46398"/>
    </ligand>
</feature>
<feature type="binding site" evidence="1">
    <location>
        <begin position="14"/>
        <end position="19"/>
    </location>
    <ligand>
        <name>ATP</name>
        <dbReference type="ChEBI" id="CHEBI:30616"/>
    </ligand>
</feature>
<feature type="binding site" evidence="1">
    <location>
        <position position="71"/>
    </location>
    <ligand>
        <name>ATP</name>
        <dbReference type="ChEBI" id="CHEBI:30616"/>
    </ligand>
</feature>
<feature type="binding site" evidence="1">
    <location>
        <position position="71"/>
    </location>
    <ligand>
        <name>Mg(2+)</name>
        <dbReference type="ChEBI" id="CHEBI:18420"/>
    </ligand>
</feature>
<feature type="binding site" evidence="1">
    <location>
        <position position="139"/>
    </location>
    <ligand>
        <name>Mg(2+)</name>
        <dbReference type="ChEBI" id="CHEBI:18420"/>
    </ligand>
</feature>
<feature type="binding site" evidence="1">
    <location>
        <begin position="146"/>
        <end position="148"/>
    </location>
    <ligand>
        <name>CTP</name>
        <dbReference type="ChEBI" id="CHEBI:37563"/>
        <note>allosteric inhibitor</note>
    </ligand>
</feature>
<feature type="binding site" evidence="1">
    <location>
        <begin position="186"/>
        <end position="191"/>
    </location>
    <ligand>
        <name>CTP</name>
        <dbReference type="ChEBI" id="CHEBI:37563"/>
        <note>allosteric inhibitor</note>
    </ligand>
</feature>
<feature type="binding site" evidence="1">
    <location>
        <begin position="186"/>
        <end position="191"/>
    </location>
    <ligand>
        <name>UTP</name>
        <dbReference type="ChEBI" id="CHEBI:46398"/>
    </ligand>
</feature>
<feature type="binding site" evidence="1">
    <location>
        <position position="222"/>
    </location>
    <ligand>
        <name>CTP</name>
        <dbReference type="ChEBI" id="CHEBI:37563"/>
        <note>allosteric inhibitor</note>
    </ligand>
</feature>
<feature type="binding site" evidence="1">
    <location>
        <position position="222"/>
    </location>
    <ligand>
        <name>UTP</name>
        <dbReference type="ChEBI" id="CHEBI:46398"/>
    </ligand>
</feature>
<feature type="binding site" evidence="1">
    <location>
        <position position="353"/>
    </location>
    <ligand>
        <name>L-glutamine</name>
        <dbReference type="ChEBI" id="CHEBI:58359"/>
    </ligand>
</feature>
<feature type="binding site" evidence="1">
    <location>
        <begin position="381"/>
        <end position="384"/>
    </location>
    <ligand>
        <name>L-glutamine</name>
        <dbReference type="ChEBI" id="CHEBI:58359"/>
    </ligand>
</feature>
<feature type="binding site" evidence="1">
    <location>
        <position position="404"/>
    </location>
    <ligand>
        <name>L-glutamine</name>
        <dbReference type="ChEBI" id="CHEBI:58359"/>
    </ligand>
</feature>
<feature type="binding site" evidence="1">
    <location>
        <position position="469"/>
    </location>
    <ligand>
        <name>L-glutamine</name>
        <dbReference type="ChEBI" id="CHEBI:58359"/>
    </ligand>
</feature>
<keyword id="KW-0067">ATP-binding</keyword>
<keyword id="KW-0315">Glutamine amidotransferase</keyword>
<keyword id="KW-0436">Ligase</keyword>
<keyword id="KW-0460">Magnesium</keyword>
<keyword id="KW-0479">Metal-binding</keyword>
<keyword id="KW-0547">Nucleotide-binding</keyword>
<keyword id="KW-0665">Pyrimidine biosynthesis</keyword>
<keyword id="KW-1185">Reference proteome</keyword>
<protein>
    <recommendedName>
        <fullName evidence="1">CTP synthase</fullName>
        <ecNumber evidence="1">6.3.4.2</ecNumber>
    </recommendedName>
    <alternativeName>
        <fullName evidence="1">Cytidine 5'-triphosphate synthase</fullName>
    </alternativeName>
    <alternativeName>
        <fullName evidence="1">Cytidine triphosphate synthetase</fullName>
        <shortName evidence="1">CTP synthetase</shortName>
        <shortName evidence="1">CTPS</shortName>
    </alternativeName>
    <alternativeName>
        <fullName evidence="1">UTP--ammonia ligase</fullName>
    </alternativeName>
</protein>
<name>PYRG_AGRFC</name>
<organism>
    <name type="scientific">Agrobacterium fabrum (strain C58 / ATCC 33970)</name>
    <name type="common">Agrobacterium tumefaciens (strain C58)</name>
    <dbReference type="NCBI Taxonomy" id="176299"/>
    <lineage>
        <taxon>Bacteria</taxon>
        <taxon>Pseudomonadati</taxon>
        <taxon>Pseudomonadota</taxon>
        <taxon>Alphaproteobacteria</taxon>
        <taxon>Hyphomicrobiales</taxon>
        <taxon>Rhizobiaceae</taxon>
        <taxon>Rhizobium/Agrobacterium group</taxon>
        <taxon>Agrobacterium</taxon>
        <taxon>Agrobacterium tumefaciens complex</taxon>
    </lineage>
</organism>
<proteinExistence type="inferred from homology"/>
<evidence type="ECO:0000255" key="1">
    <source>
        <dbReference type="HAMAP-Rule" id="MF_01227"/>
    </source>
</evidence>
<evidence type="ECO:0000305" key="2"/>
<reference key="1">
    <citation type="journal article" date="2001" name="Science">
        <title>The genome of the natural genetic engineer Agrobacterium tumefaciens C58.</title>
        <authorList>
            <person name="Wood D.W."/>
            <person name="Setubal J.C."/>
            <person name="Kaul R."/>
            <person name="Monks D.E."/>
            <person name="Kitajima J.P."/>
            <person name="Okura V.K."/>
            <person name="Zhou Y."/>
            <person name="Chen L."/>
            <person name="Wood G.E."/>
            <person name="Almeida N.F. Jr."/>
            <person name="Woo L."/>
            <person name="Chen Y."/>
            <person name="Paulsen I.T."/>
            <person name="Eisen J.A."/>
            <person name="Karp P.D."/>
            <person name="Bovee D. Sr."/>
            <person name="Chapman P."/>
            <person name="Clendenning J."/>
            <person name="Deatherage G."/>
            <person name="Gillet W."/>
            <person name="Grant C."/>
            <person name="Kutyavin T."/>
            <person name="Levy R."/>
            <person name="Li M.-J."/>
            <person name="McClelland E."/>
            <person name="Palmieri A."/>
            <person name="Raymond C."/>
            <person name="Rouse G."/>
            <person name="Saenphimmachak C."/>
            <person name="Wu Z."/>
            <person name="Romero P."/>
            <person name="Gordon D."/>
            <person name="Zhang S."/>
            <person name="Yoo H."/>
            <person name="Tao Y."/>
            <person name="Biddle P."/>
            <person name="Jung M."/>
            <person name="Krespan W."/>
            <person name="Perry M."/>
            <person name="Gordon-Kamm B."/>
            <person name="Liao L."/>
            <person name="Kim S."/>
            <person name="Hendrick C."/>
            <person name="Zhao Z.-Y."/>
            <person name="Dolan M."/>
            <person name="Chumley F."/>
            <person name="Tingey S.V."/>
            <person name="Tomb J.-F."/>
            <person name="Gordon M.P."/>
            <person name="Olson M.V."/>
            <person name="Nester E.W."/>
        </authorList>
    </citation>
    <scope>NUCLEOTIDE SEQUENCE [LARGE SCALE GENOMIC DNA]</scope>
    <source>
        <strain>C58 / ATCC 33970</strain>
    </source>
</reference>
<reference key="2">
    <citation type="journal article" date="2001" name="Science">
        <title>Genome sequence of the plant pathogen and biotechnology agent Agrobacterium tumefaciens C58.</title>
        <authorList>
            <person name="Goodner B."/>
            <person name="Hinkle G."/>
            <person name="Gattung S."/>
            <person name="Miller N."/>
            <person name="Blanchard M."/>
            <person name="Qurollo B."/>
            <person name="Goldman B.S."/>
            <person name="Cao Y."/>
            <person name="Askenazi M."/>
            <person name="Halling C."/>
            <person name="Mullin L."/>
            <person name="Houmiel K."/>
            <person name="Gordon J."/>
            <person name="Vaudin M."/>
            <person name="Iartchouk O."/>
            <person name="Epp A."/>
            <person name="Liu F."/>
            <person name="Wollam C."/>
            <person name="Allinger M."/>
            <person name="Doughty D."/>
            <person name="Scott C."/>
            <person name="Lappas C."/>
            <person name="Markelz B."/>
            <person name="Flanagan C."/>
            <person name="Crowell C."/>
            <person name="Gurson J."/>
            <person name="Lomo C."/>
            <person name="Sear C."/>
            <person name="Strub G."/>
            <person name="Cielo C."/>
            <person name="Slater S."/>
        </authorList>
    </citation>
    <scope>NUCLEOTIDE SEQUENCE [LARGE SCALE GENOMIC DNA]</scope>
    <source>
        <strain>C58 / ATCC 33970</strain>
    </source>
</reference>
<accession>Q8UEY5</accession>
<gene>
    <name evidence="1" type="primary">pyrG</name>
    <name type="ordered locus">Atu1618</name>
    <name type="ORF">AGR_C_2984</name>
</gene>